<dbReference type="EC" id="2.4.2.18" evidence="1"/>
<dbReference type="EMBL" id="CP000076">
    <property type="protein sequence ID" value="AAY94815.1"/>
    <property type="molecule type" value="Genomic_DNA"/>
</dbReference>
<dbReference type="RefSeq" id="WP_011063800.1">
    <property type="nucleotide sequence ID" value="NC_004129.6"/>
</dbReference>
<dbReference type="SMR" id="Q4K502"/>
<dbReference type="STRING" id="220664.PFL_5622"/>
<dbReference type="GeneID" id="57478572"/>
<dbReference type="KEGG" id="pfl:PFL_5622"/>
<dbReference type="PATRIC" id="fig|220664.5.peg.5734"/>
<dbReference type="eggNOG" id="COG0547">
    <property type="taxonomic scope" value="Bacteria"/>
</dbReference>
<dbReference type="HOGENOM" id="CLU_034315_2_1_6"/>
<dbReference type="UniPathway" id="UPA00035">
    <property type="reaction ID" value="UER00041"/>
</dbReference>
<dbReference type="Proteomes" id="UP000008540">
    <property type="component" value="Chromosome"/>
</dbReference>
<dbReference type="GO" id="GO:0005829">
    <property type="term" value="C:cytosol"/>
    <property type="evidence" value="ECO:0007669"/>
    <property type="project" value="TreeGrafter"/>
</dbReference>
<dbReference type="GO" id="GO:0004048">
    <property type="term" value="F:anthranilate phosphoribosyltransferase activity"/>
    <property type="evidence" value="ECO:0007669"/>
    <property type="project" value="UniProtKB-UniRule"/>
</dbReference>
<dbReference type="GO" id="GO:0000287">
    <property type="term" value="F:magnesium ion binding"/>
    <property type="evidence" value="ECO:0007669"/>
    <property type="project" value="UniProtKB-UniRule"/>
</dbReference>
<dbReference type="GO" id="GO:0000162">
    <property type="term" value="P:L-tryptophan biosynthetic process"/>
    <property type="evidence" value="ECO:0007669"/>
    <property type="project" value="UniProtKB-UniRule"/>
</dbReference>
<dbReference type="FunFam" id="1.20.970.10:FF:000006">
    <property type="entry name" value="Anthranilate phosphoribosyltransferase"/>
    <property type="match status" value="1"/>
</dbReference>
<dbReference type="FunFam" id="3.40.1030.10:FF:000002">
    <property type="entry name" value="Anthranilate phosphoribosyltransferase"/>
    <property type="match status" value="1"/>
</dbReference>
<dbReference type="Gene3D" id="3.40.1030.10">
    <property type="entry name" value="Nucleoside phosphorylase/phosphoribosyltransferase catalytic domain"/>
    <property type="match status" value="1"/>
</dbReference>
<dbReference type="Gene3D" id="1.20.970.10">
    <property type="entry name" value="Transferase, Pyrimidine Nucleoside Phosphorylase, Chain C"/>
    <property type="match status" value="1"/>
</dbReference>
<dbReference type="HAMAP" id="MF_00211">
    <property type="entry name" value="TrpD"/>
    <property type="match status" value="1"/>
</dbReference>
<dbReference type="InterPro" id="IPR005940">
    <property type="entry name" value="Anthranilate_Pribosyl_Tfrase"/>
</dbReference>
<dbReference type="InterPro" id="IPR000312">
    <property type="entry name" value="Glycosyl_Trfase_fam3"/>
</dbReference>
<dbReference type="InterPro" id="IPR017459">
    <property type="entry name" value="Glycosyl_Trfase_fam3_N_dom"/>
</dbReference>
<dbReference type="InterPro" id="IPR036320">
    <property type="entry name" value="Glycosyl_Trfase_fam3_N_dom_sf"/>
</dbReference>
<dbReference type="InterPro" id="IPR035902">
    <property type="entry name" value="Nuc_phospho_transferase"/>
</dbReference>
<dbReference type="NCBIfam" id="TIGR01245">
    <property type="entry name" value="trpD"/>
    <property type="match status" value="1"/>
</dbReference>
<dbReference type="PANTHER" id="PTHR43285">
    <property type="entry name" value="ANTHRANILATE PHOSPHORIBOSYLTRANSFERASE"/>
    <property type="match status" value="1"/>
</dbReference>
<dbReference type="PANTHER" id="PTHR43285:SF2">
    <property type="entry name" value="ANTHRANILATE PHOSPHORIBOSYLTRANSFERASE"/>
    <property type="match status" value="1"/>
</dbReference>
<dbReference type="Pfam" id="PF02885">
    <property type="entry name" value="Glycos_trans_3N"/>
    <property type="match status" value="1"/>
</dbReference>
<dbReference type="Pfam" id="PF00591">
    <property type="entry name" value="Glycos_transf_3"/>
    <property type="match status" value="1"/>
</dbReference>
<dbReference type="SUPFAM" id="SSF52418">
    <property type="entry name" value="Nucleoside phosphorylase/phosphoribosyltransferase catalytic domain"/>
    <property type="match status" value="1"/>
</dbReference>
<dbReference type="SUPFAM" id="SSF47648">
    <property type="entry name" value="Nucleoside phosphorylase/phosphoribosyltransferase N-terminal domain"/>
    <property type="match status" value="1"/>
</dbReference>
<name>TRPD_PSEF5</name>
<reference key="1">
    <citation type="journal article" date="2005" name="Nat. Biotechnol.">
        <title>Complete genome sequence of the plant commensal Pseudomonas fluorescens Pf-5.</title>
        <authorList>
            <person name="Paulsen I.T."/>
            <person name="Press C.M."/>
            <person name="Ravel J."/>
            <person name="Kobayashi D.Y."/>
            <person name="Myers G.S.A."/>
            <person name="Mavrodi D.V."/>
            <person name="DeBoy R.T."/>
            <person name="Seshadri R."/>
            <person name="Ren Q."/>
            <person name="Madupu R."/>
            <person name="Dodson R.J."/>
            <person name="Durkin A.S."/>
            <person name="Brinkac L.M."/>
            <person name="Daugherty S.C."/>
            <person name="Sullivan S.A."/>
            <person name="Rosovitz M.J."/>
            <person name="Gwinn M.L."/>
            <person name="Zhou L."/>
            <person name="Schneider D.J."/>
            <person name="Cartinhour S.W."/>
            <person name="Nelson W.C."/>
            <person name="Weidman J."/>
            <person name="Watkins K."/>
            <person name="Tran K."/>
            <person name="Khouri H."/>
            <person name="Pierson E.A."/>
            <person name="Pierson L.S. III"/>
            <person name="Thomashow L.S."/>
            <person name="Loper J.E."/>
        </authorList>
    </citation>
    <scope>NUCLEOTIDE SEQUENCE [LARGE SCALE GENOMIC DNA]</scope>
    <source>
        <strain>ATCC BAA-477 / NRRL B-23932 / Pf-5</strain>
    </source>
</reference>
<organism>
    <name type="scientific">Pseudomonas fluorescens (strain ATCC BAA-477 / NRRL B-23932 / Pf-5)</name>
    <dbReference type="NCBI Taxonomy" id="220664"/>
    <lineage>
        <taxon>Bacteria</taxon>
        <taxon>Pseudomonadati</taxon>
        <taxon>Pseudomonadota</taxon>
        <taxon>Gammaproteobacteria</taxon>
        <taxon>Pseudomonadales</taxon>
        <taxon>Pseudomonadaceae</taxon>
        <taxon>Pseudomonas</taxon>
    </lineage>
</organism>
<accession>Q4K502</accession>
<evidence type="ECO:0000255" key="1">
    <source>
        <dbReference type="HAMAP-Rule" id="MF_00211"/>
    </source>
</evidence>
<feature type="chain" id="PRO_0000227183" description="Anthranilate phosphoribosyltransferase">
    <location>
        <begin position="1"/>
        <end position="349"/>
    </location>
</feature>
<feature type="binding site" evidence="1">
    <location>
        <position position="82"/>
    </location>
    <ligand>
        <name>5-phospho-alpha-D-ribose 1-diphosphate</name>
        <dbReference type="ChEBI" id="CHEBI:58017"/>
    </ligand>
</feature>
<feature type="binding site" evidence="1">
    <location>
        <position position="82"/>
    </location>
    <ligand>
        <name>anthranilate</name>
        <dbReference type="ChEBI" id="CHEBI:16567"/>
        <label>1</label>
    </ligand>
</feature>
<feature type="binding site" evidence="1">
    <location>
        <begin position="85"/>
        <end position="86"/>
    </location>
    <ligand>
        <name>5-phospho-alpha-D-ribose 1-diphosphate</name>
        <dbReference type="ChEBI" id="CHEBI:58017"/>
    </ligand>
</feature>
<feature type="binding site" evidence="1">
    <location>
        <begin position="92"/>
        <end position="95"/>
    </location>
    <ligand>
        <name>5-phospho-alpha-D-ribose 1-diphosphate</name>
        <dbReference type="ChEBI" id="CHEBI:58017"/>
    </ligand>
</feature>
<feature type="binding site" evidence="1">
    <location>
        <position position="94"/>
    </location>
    <ligand>
        <name>Mg(2+)</name>
        <dbReference type="ChEBI" id="CHEBI:18420"/>
        <label>1</label>
    </ligand>
</feature>
<feature type="binding site" evidence="1">
    <location>
        <begin position="110"/>
        <end position="118"/>
    </location>
    <ligand>
        <name>5-phospho-alpha-D-ribose 1-diphosphate</name>
        <dbReference type="ChEBI" id="CHEBI:58017"/>
    </ligand>
</feature>
<feature type="binding site" evidence="1">
    <location>
        <position position="113"/>
    </location>
    <ligand>
        <name>anthranilate</name>
        <dbReference type="ChEBI" id="CHEBI:16567"/>
        <label>1</label>
    </ligand>
</feature>
<feature type="binding site" evidence="1">
    <location>
        <position position="122"/>
    </location>
    <ligand>
        <name>5-phospho-alpha-D-ribose 1-diphosphate</name>
        <dbReference type="ChEBI" id="CHEBI:58017"/>
    </ligand>
</feature>
<feature type="binding site" evidence="1">
    <location>
        <position position="168"/>
    </location>
    <ligand>
        <name>anthranilate</name>
        <dbReference type="ChEBI" id="CHEBI:16567"/>
        <label>2</label>
    </ligand>
</feature>
<feature type="binding site" evidence="1">
    <location>
        <position position="227"/>
    </location>
    <ligand>
        <name>Mg(2+)</name>
        <dbReference type="ChEBI" id="CHEBI:18420"/>
        <label>2</label>
    </ligand>
</feature>
<feature type="binding site" evidence="1">
    <location>
        <position position="228"/>
    </location>
    <ligand>
        <name>Mg(2+)</name>
        <dbReference type="ChEBI" id="CHEBI:18420"/>
        <label>1</label>
    </ligand>
</feature>
<feature type="binding site" evidence="1">
    <location>
        <position position="228"/>
    </location>
    <ligand>
        <name>Mg(2+)</name>
        <dbReference type="ChEBI" id="CHEBI:18420"/>
        <label>2</label>
    </ligand>
</feature>
<proteinExistence type="inferred from homology"/>
<sequence>MDIKTALSRIVGHLDLSTEEMRSVMREIMTGQCTDAQIGAFMMAMRMKSESIDEIVGAVSAMRELADRVELKTLDGVVDVVGTGGDGANIFNVSTASSFVVAAAGCTVAKHGNRAVSGKSGSADLLEAAGIYLNLTPVQVARCIDNVGIGFMFAQSHHGAMKYAAGPRRDLGLRTLFNMLGPLTNPAGVKHQVVGVFTQALCRPLAEVLQRLGSKHVLVVHSQDGLDEFSLAAPTYVAELKNDQITEYWVQPEDLGMKSQSLFGLVVESPAASLELIRDALGRRKTEHGQKAAEMIVLNAGAALYAADHASSLKEGVALAHDALHTGLAREKLEELGAFTAVFKQENEG</sequence>
<keyword id="KW-0028">Amino-acid biosynthesis</keyword>
<keyword id="KW-0057">Aromatic amino acid biosynthesis</keyword>
<keyword id="KW-0328">Glycosyltransferase</keyword>
<keyword id="KW-0460">Magnesium</keyword>
<keyword id="KW-0479">Metal-binding</keyword>
<keyword id="KW-0808">Transferase</keyword>
<keyword id="KW-0822">Tryptophan biosynthesis</keyword>
<gene>
    <name evidence="1" type="primary">trpD</name>
    <name type="ordered locus">PFL_5622</name>
</gene>
<comment type="function">
    <text evidence="1">Catalyzes the transfer of the phosphoribosyl group of 5-phosphorylribose-1-pyrophosphate (PRPP) to anthranilate to yield N-(5'-phosphoribosyl)-anthranilate (PRA).</text>
</comment>
<comment type="catalytic activity">
    <reaction evidence="1">
        <text>N-(5-phospho-beta-D-ribosyl)anthranilate + diphosphate = 5-phospho-alpha-D-ribose 1-diphosphate + anthranilate</text>
        <dbReference type="Rhea" id="RHEA:11768"/>
        <dbReference type="ChEBI" id="CHEBI:16567"/>
        <dbReference type="ChEBI" id="CHEBI:18277"/>
        <dbReference type="ChEBI" id="CHEBI:33019"/>
        <dbReference type="ChEBI" id="CHEBI:58017"/>
        <dbReference type="EC" id="2.4.2.18"/>
    </reaction>
</comment>
<comment type="cofactor">
    <cofactor evidence="1">
        <name>Mg(2+)</name>
        <dbReference type="ChEBI" id="CHEBI:18420"/>
    </cofactor>
    <text evidence="1">Binds 2 magnesium ions per monomer.</text>
</comment>
<comment type="pathway">
    <text evidence="1">Amino-acid biosynthesis; L-tryptophan biosynthesis; L-tryptophan from chorismate: step 2/5.</text>
</comment>
<comment type="subunit">
    <text evidence="1">Homodimer.</text>
</comment>
<comment type="similarity">
    <text evidence="1">Belongs to the anthranilate phosphoribosyltransferase family.</text>
</comment>
<protein>
    <recommendedName>
        <fullName evidence="1">Anthranilate phosphoribosyltransferase</fullName>
        <ecNumber evidence="1">2.4.2.18</ecNumber>
    </recommendedName>
</protein>